<dbReference type="EMBL" id="AF117896">
    <property type="protein sequence ID" value="AAD42053.1"/>
    <property type="status" value="ALT_SEQ"/>
    <property type="molecule type" value="Genomic_DNA"/>
</dbReference>
<dbReference type="EMBL" id="AE014297">
    <property type="protein sequence ID" value="AAF55339.1"/>
    <property type="molecule type" value="Genomic_DNA"/>
</dbReference>
<dbReference type="EMBL" id="BT023797">
    <property type="protein sequence ID" value="AAZ41806.1"/>
    <property type="molecule type" value="mRNA"/>
</dbReference>
<dbReference type="RefSeq" id="NP_001262642.1">
    <property type="nucleotide sequence ID" value="NM_001275713.1"/>
</dbReference>
<dbReference type="RefSeq" id="NP_001262643.1">
    <property type="nucleotide sequence ID" value="NM_001275714.1"/>
</dbReference>
<dbReference type="RefSeq" id="NP_536741.1">
    <property type="nucleotide sequence ID" value="NM_080493.3"/>
</dbReference>
<dbReference type="SMR" id="Q9VET0"/>
<dbReference type="BioGRID" id="67063">
    <property type="interactions" value="1"/>
</dbReference>
<dbReference type="FunCoup" id="Q9VET0">
    <property type="interactions" value="48"/>
</dbReference>
<dbReference type="STRING" id="7227.FBpp0304075"/>
<dbReference type="PaxDb" id="7227-FBpp0304074"/>
<dbReference type="DNASU" id="42018"/>
<dbReference type="EnsemblMetazoa" id="FBtr0083328">
    <property type="protein sequence ID" value="FBpp0082778"/>
    <property type="gene ID" value="FBgn0027109"/>
</dbReference>
<dbReference type="EnsemblMetazoa" id="FBtr0331685">
    <property type="protein sequence ID" value="FBpp0304074"/>
    <property type="gene ID" value="FBgn0027109"/>
</dbReference>
<dbReference type="EnsemblMetazoa" id="FBtr0331686">
    <property type="protein sequence ID" value="FBpp0304075"/>
    <property type="gene ID" value="FBgn0027109"/>
</dbReference>
<dbReference type="GeneID" id="42018"/>
<dbReference type="KEGG" id="dme:Dmel_CG10342"/>
<dbReference type="AGR" id="FB:FBgn0027109"/>
<dbReference type="CTD" id="42018"/>
<dbReference type="FlyBase" id="FBgn0027109">
    <property type="gene designation" value="NPF"/>
</dbReference>
<dbReference type="VEuPathDB" id="VectorBase:FBgn0027109"/>
<dbReference type="eggNOG" id="ENOG502T6VN">
    <property type="taxonomic scope" value="Eukaryota"/>
</dbReference>
<dbReference type="HOGENOM" id="CLU_2294604_0_0_1"/>
<dbReference type="InParanoid" id="Q9VET0"/>
<dbReference type="OMA" id="CIVEASK"/>
<dbReference type="OrthoDB" id="8181631at2759"/>
<dbReference type="PhylomeDB" id="Q9VET0"/>
<dbReference type="BioGRID-ORCS" id="42018">
    <property type="hits" value="0 hits in 1 CRISPR screen"/>
</dbReference>
<dbReference type="GenomeRNAi" id="42018"/>
<dbReference type="PRO" id="PR:Q9VET0"/>
<dbReference type="Proteomes" id="UP000000803">
    <property type="component" value="Chromosome 3R"/>
</dbReference>
<dbReference type="Bgee" id="FBgn0027109">
    <property type="expression patterns" value="Expressed in adult middle midgut class II enteroendocrine cell in adult midgut (Drosophila) and 31 other cell types or tissues"/>
</dbReference>
<dbReference type="ExpressionAtlas" id="Q9VET0">
    <property type="expression patterns" value="baseline and differential"/>
</dbReference>
<dbReference type="GO" id="GO:0005576">
    <property type="term" value="C:extracellular region"/>
    <property type="evidence" value="ECO:0000314"/>
    <property type="project" value="UniProtKB"/>
</dbReference>
<dbReference type="GO" id="GO:0001664">
    <property type="term" value="F:G protein-coupled receptor binding"/>
    <property type="evidence" value="ECO:0000353"/>
    <property type="project" value="FlyBase"/>
</dbReference>
<dbReference type="GO" id="GO:0071859">
    <property type="term" value="F:neuropeptide F receptor binding"/>
    <property type="evidence" value="ECO:0000353"/>
    <property type="project" value="FlyBase"/>
</dbReference>
<dbReference type="GO" id="GO:0005184">
    <property type="term" value="F:neuropeptide hormone activity"/>
    <property type="evidence" value="ECO:0000315"/>
    <property type="project" value="UniProtKB"/>
</dbReference>
<dbReference type="GO" id="GO:0048512">
    <property type="term" value="P:circadian behavior"/>
    <property type="evidence" value="ECO:0000314"/>
    <property type="project" value="FlyBase"/>
</dbReference>
<dbReference type="GO" id="GO:0007623">
    <property type="term" value="P:circadian rhythm"/>
    <property type="evidence" value="ECO:0000270"/>
    <property type="project" value="FlyBase"/>
</dbReference>
<dbReference type="GO" id="GO:0007586">
    <property type="term" value="P:digestion"/>
    <property type="evidence" value="ECO:0007669"/>
    <property type="project" value="UniProtKB-KW"/>
</dbReference>
<dbReference type="GO" id="GO:0007186">
    <property type="term" value="P:G protein-coupled receptor signaling pathway"/>
    <property type="evidence" value="ECO:0000314"/>
    <property type="project" value="FlyBase"/>
</dbReference>
<dbReference type="GO" id="GO:0030536">
    <property type="term" value="P:larval feeding behavior"/>
    <property type="evidence" value="ECO:0000315"/>
    <property type="project" value="FlyBase"/>
</dbReference>
<dbReference type="GO" id="GO:0035177">
    <property type="term" value="P:larval foraging behavior"/>
    <property type="evidence" value="ECO:0000315"/>
    <property type="project" value="UniProtKB"/>
</dbReference>
<dbReference type="GO" id="GO:0008345">
    <property type="term" value="P:larval locomotory behavior"/>
    <property type="evidence" value="ECO:0000304"/>
    <property type="project" value="FlyBase"/>
</dbReference>
<dbReference type="GO" id="GO:0045475">
    <property type="term" value="P:locomotor rhythm"/>
    <property type="evidence" value="ECO:0000315"/>
    <property type="project" value="FlyBase"/>
</dbReference>
<dbReference type="GO" id="GO:0008049">
    <property type="term" value="P:male courtship behavior"/>
    <property type="evidence" value="ECO:0000315"/>
    <property type="project" value="FlyBase"/>
</dbReference>
<dbReference type="GO" id="GO:0044703">
    <property type="term" value="P:multi-organism reproductive process"/>
    <property type="evidence" value="ECO:0000315"/>
    <property type="project" value="FlyBase"/>
</dbReference>
<dbReference type="GO" id="GO:0007218">
    <property type="term" value="P:neuropeptide signaling pathway"/>
    <property type="evidence" value="ECO:0000314"/>
    <property type="project" value="FlyBase"/>
</dbReference>
<dbReference type="GO" id="GO:0042048">
    <property type="term" value="P:olfactory behavior"/>
    <property type="evidence" value="ECO:0000315"/>
    <property type="project" value="FlyBase"/>
</dbReference>
<dbReference type="GO" id="GO:0032095">
    <property type="term" value="P:regulation of response to food"/>
    <property type="evidence" value="ECO:0000315"/>
    <property type="project" value="UniProtKB"/>
</dbReference>
<dbReference type="GO" id="GO:1990834">
    <property type="term" value="P:response to odorant"/>
    <property type="evidence" value="ECO:0000315"/>
    <property type="project" value="FlyBase"/>
</dbReference>
<dbReference type="GO" id="GO:0035176">
    <property type="term" value="P:social behavior"/>
    <property type="evidence" value="ECO:0000315"/>
    <property type="project" value="UniProtKB"/>
</dbReference>
<name>NPF_DROME</name>
<protein>
    <recommendedName>
        <fullName>Neuropeptide F</fullName>
        <shortName>NPF</shortName>
    </recommendedName>
    <alternativeName>
        <fullName>dNPF</fullName>
    </alternativeName>
</protein>
<gene>
    <name type="primary">NPF</name>
    <name type="ORF">CG10342</name>
</gene>
<keyword id="KW-0027">Amidation</keyword>
<keyword id="KW-0085">Behavior</keyword>
<keyword id="KW-0165">Cleavage on pair of basic residues</keyword>
<keyword id="KW-0222">Digestion</keyword>
<keyword id="KW-0903">Direct protein sequencing</keyword>
<keyword id="KW-0372">Hormone</keyword>
<keyword id="KW-0527">Neuropeptide</keyword>
<keyword id="KW-1185">Reference proteome</keyword>
<keyword id="KW-0964">Secreted</keyword>
<keyword id="KW-0732">Signal</keyword>
<keyword id="KW-0346">Stress response</keyword>
<sequence length="102" mass="11465">MCQTMRCILVACVALALLAAGCRVEASNSRPPRKNDVNTMADAYKFLQDLDTYYGDRARVRFGKRGSLMDILRNHEMDNINLGKNANNGGEFARGFNEEEIF</sequence>
<accession>Q9VET0</accession>
<accession>Q9Y1K3</accession>
<reference evidence="10 11" key="1">
    <citation type="journal article" date="1999" name="Peptides">
        <title>Identification of a Drosophila brain-gut peptide related to the neuropeptide Y family.</title>
        <authorList>
            <person name="Brown M.R."/>
            <person name="Crim J.W."/>
            <person name="Arata R.C."/>
            <person name="Cai H.N."/>
            <person name="Chun C."/>
            <person name="Shen P."/>
        </authorList>
    </citation>
    <scope>NUCLEOTIDE SEQUENCE [GENOMIC DNA]</scope>
    <scope>PROTEIN SEQUENCE OF 35-62</scope>
    <scope>FUNCTION</scope>
    <scope>SUBCELLULAR LOCATION</scope>
    <scope>TISSUE SPECIFICITY</scope>
    <scope>AMIDATION AT PHE-62</scope>
    <source>
        <strain evidence="2">Oregon-R</strain>
    </source>
</reference>
<reference evidence="12" key="2">
    <citation type="journal article" date="2000" name="Science">
        <title>The genome sequence of Drosophila melanogaster.</title>
        <authorList>
            <person name="Adams M.D."/>
            <person name="Celniker S.E."/>
            <person name="Holt R.A."/>
            <person name="Evans C.A."/>
            <person name="Gocayne J.D."/>
            <person name="Amanatides P.G."/>
            <person name="Scherer S.E."/>
            <person name="Li P.W."/>
            <person name="Hoskins R.A."/>
            <person name="Galle R.F."/>
            <person name="George R.A."/>
            <person name="Lewis S.E."/>
            <person name="Richards S."/>
            <person name="Ashburner M."/>
            <person name="Henderson S.N."/>
            <person name="Sutton G.G."/>
            <person name="Wortman J.R."/>
            <person name="Yandell M.D."/>
            <person name="Zhang Q."/>
            <person name="Chen L.X."/>
            <person name="Brandon R.C."/>
            <person name="Rogers Y.-H.C."/>
            <person name="Blazej R.G."/>
            <person name="Champe M."/>
            <person name="Pfeiffer B.D."/>
            <person name="Wan K.H."/>
            <person name="Doyle C."/>
            <person name="Baxter E.G."/>
            <person name="Helt G."/>
            <person name="Nelson C.R."/>
            <person name="Miklos G.L.G."/>
            <person name="Abril J.F."/>
            <person name="Agbayani A."/>
            <person name="An H.-J."/>
            <person name="Andrews-Pfannkoch C."/>
            <person name="Baldwin D."/>
            <person name="Ballew R.M."/>
            <person name="Basu A."/>
            <person name="Baxendale J."/>
            <person name="Bayraktaroglu L."/>
            <person name="Beasley E.M."/>
            <person name="Beeson K.Y."/>
            <person name="Benos P.V."/>
            <person name="Berman B.P."/>
            <person name="Bhandari D."/>
            <person name="Bolshakov S."/>
            <person name="Borkova D."/>
            <person name="Botchan M.R."/>
            <person name="Bouck J."/>
            <person name="Brokstein P."/>
            <person name="Brottier P."/>
            <person name="Burtis K.C."/>
            <person name="Busam D.A."/>
            <person name="Butler H."/>
            <person name="Cadieu E."/>
            <person name="Center A."/>
            <person name="Chandra I."/>
            <person name="Cherry J.M."/>
            <person name="Cawley S."/>
            <person name="Dahlke C."/>
            <person name="Davenport L.B."/>
            <person name="Davies P."/>
            <person name="de Pablos B."/>
            <person name="Delcher A."/>
            <person name="Deng Z."/>
            <person name="Mays A.D."/>
            <person name="Dew I."/>
            <person name="Dietz S.M."/>
            <person name="Dodson K."/>
            <person name="Doup L.E."/>
            <person name="Downes M."/>
            <person name="Dugan-Rocha S."/>
            <person name="Dunkov B.C."/>
            <person name="Dunn P."/>
            <person name="Durbin K.J."/>
            <person name="Evangelista C.C."/>
            <person name="Ferraz C."/>
            <person name="Ferriera S."/>
            <person name="Fleischmann W."/>
            <person name="Fosler C."/>
            <person name="Gabrielian A.E."/>
            <person name="Garg N.S."/>
            <person name="Gelbart W.M."/>
            <person name="Glasser K."/>
            <person name="Glodek A."/>
            <person name="Gong F."/>
            <person name="Gorrell J.H."/>
            <person name="Gu Z."/>
            <person name="Guan P."/>
            <person name="Harris M."/>
            <person name="Harris N.L."/>
            <person name="Harvey D.A."/>
            <person name="Heiman T.J."/>
            <person name="Hernandez J.R."/>
            <person name="Houck J."/>
            <person name="Hostin D."/>
            <person name="Houston K.A."/>
            <person name="Howland T.J."/>
            <person name="Wei M.-H."/>
            <person name="Ibegwam C."/>
            <person name="Jalali M."/>
            <person name="Kalush F."/>
            <person name="Karpen G.H."/>
            <person name="Ke Z."/>
            <person name="Kennison J.A."/>
            <person name="Ketchum K.A."/>
            <person name="Kimmel B.E."/>
            <person name="Kodira C.D."/>
            <person name="Kraft C.L."/>
            <person name="Kravitz S."/>
            <person name="Kulp D."/>
            <person name="Lai Z."/>
            <person name="Lasko P."/>
            <person name="Lei Y."/>
            <person name="Levitsky A.A."/>
            <person name="Li J.H."/>
            <person name="Li Z."/>
            <person name="Liang Y."/>
            <person name="Lin X."/>
            <person name="Liu X."/>
            <person name="Mattei B."/>
            <person name="McIntosh T.C."/>
            <person name="McLeod M.P."/>
            <person name="McPherson D."/>
            <person name="Merkulov G."/>
            <person name="Milshina N.V."/>
            <person name="Mobarry C."/>
            <person name="Morris J."/>
            <person name="Moshrefi A."/>
            <person name="Mount S.M."/>
            <person name="Moy M."/>
            <person name="Murphy B."/>
            <person name="Murphy L."/>
            <person name="Muzny D.M."/>
            <person name="Nelson D.L."/>
            <person name="Nelson D.R."/>
            <person name="Nelson K.A."/>
            <person name="Nixon K."/>
            <person name="Nusskern D.R."/>
            <person name="Pacleb J.M."/>
            <person name="Palazzolo M."/>
            <person name="Pittman G.S."/>
            <person name="Pan S."/>
            <person name="Pollard J."/>
            <person name="Puri V."/>
            <person name="Reese M.G."/>
            <person name="Reinert K."/>
            <person name="Remington K."/>
            <person name="Saunders R.D.C."/>
            <person name="Scheeler F."/>
            <person name="Shen H."/>
            <person name="Shue B.C."/>
            <person name="Siden-Kiamos I."/>
            <person name="Simpson M."/>
            <person name="Skupski M.P."/>
            <person name="Smith T.J."/>
            <person name="Spier E."/>
            <person name="Spradling A.C."/>
            <person name="Stapleton M."/>
            <person name="Strong R."/>
            <person name="Sun E."/>
            <person name="Svirskas R."/>
            <person name="Tector C."/>
            <person name="Turner R."/>
            <person name="Venter E."/>
            <person name="Wang A.H."/>
            <person name="Wang X."/>
            <person name="Wang Z.-Y."/>
            <person name="Wassarman D.A."/>
            <person name="Weinstock G.M."/>
            <person name="Weissenbach J."/>
            <person name="Williams S.M."/>
            <person name="Woodage T."/>
            <person name="Worley K.C."/>
            <person name="Wu D."/>
            <person name="Yang S."/>
            <person name="Yao Q.A."/>
            <person name="Ye J."/>
            <person name="Yeh R.-F."/>
            <person name="Zaveri J.S."/>
            <person name="Zhan M."/>
            <person name="Zhang G."/>
            <person name="Zhao Q."/>
            <person name="Zheng L."/>
            <person name="Zheng X.H."/>
            <person name="Zhong F.N."/>
            <person name="Zhong W."/>
            <person name="Zhou X."/>
            <person name="Zhu S.C."/>
            <person name="Zhu X."/>
            <person name="Smith H.O."/>
            <person name="Gibbs R.A."/>
            <person name="Myers E.W."/>
            <person name="Rubin G.M."/>
            <person name="Venter J.C."/>
        </authorList>
    </citation>
    <scope>NUCLEOTIDE SEQUENCE [LARGE SCALE GENOMIC DNA]</scope>
    <source>
        <strain evidence="3">Berkeley</strain>
    </source>
</reference>
<reference evidence="10 12" key="3">
    <citation type="journal article" date="2002" name="Genome Biol.">
        <title>Annotation of the Drosophila melanogaster euchromatic genome: a systematic review.</title>
        <authorList>
            <person name="Misra S."/>
            <person name="Crosby M.A."/>
            <person name="Mungall C.J."/>
            <person name="Matthews B.B."/>
            <person name="Campbell K.S."/>
            <person name="Hradecky P."/>
            <person name="Huang Y."/>
            <person name="Kaminker J.S."/>
            <person name="Millburn G.H."/>
            <person name="Prochnik S.E."/>
            <person name="Smith C.D."/>
            <person name="Tupy J.L."/>
            <person name="Whitfield E.J."/>
            <person name="Bayraktaroglu L."/>
            <person name="Berman B.P."/>
            <person name="Bettencourt B.R."/>
            <person name="Celniker S.E."/>
            <person name="de Grey A.D.N.J."/>
            <person name="Drysdale R.A."/>
            <person name="Harris N.L."/>
            <person name="Richter J."/>
            <person name="Russo S."/>
            <person name="Schroeder A.J."/>
            <person name="Shu S.Q."/>
            <person name="Stapleton M."/>
            <person name="Yamada C."/>
            <person name="Ashburner M."/>
            <person name="Gelbart W.M."/>
            <person name="Rubin G.M."/>
            <person name="Lewis S.E."/>
        </authorList>
    </citation>
    <scope>GENOME REANNOTATION</scope>
    <source>
        <strain>Berkeley</strain>
    </source>
</reference>
<reference evidence="13" key="4">
    <citation type="submission" date="2005-08" db="EMBL/GenBank/DDBJ databases">
        <authorList>
            <person name="Stapleton M."/>
            <person name="Carlson J.W."/>
            <person name="Chavez C."/>
            <person name="Frise E."/>
            <person name="George R.A."/>
            <person name="Pacleb J.M."/>
            <person name="Park S."/>
            <person name="Wan K.H."/>
            <person name="Yu C."/>
            <person name="Celniker S.E."/>
        </authorList>
    </citation>
    <scope>NUCLEOTIDE SEQUENCE [LARGE SCALE MRNA]</scope>
    <source>
        <strain evidence="13">Berkeley</strain>
        <tissue>Head</tissue>
    </source>
</reference>
<reference evidence="10" key="5">
    <citation type="journal article" date="2001" name="J. Neurobiol.">
        <title>Drosophila neuropeptide F mediates integration of chemosensory stimulation and conditioning of the nervous system by food.</title>
        <authorList>
            <person name="Shen P."/>
            <person name="Cai H.N."/>
        </authorList>
    </citation>
    <scope>FUNCTION</scope>
    <scope>TISSUE SPECIFICITY</scope>
</reference>
<reference evidence="10" key="6">
    <citation type="journal article" date="2003" name="Neuron">
        <title>Developmental control of foraging and social behavior by the Drosophila neuropeptide Y-like system.</title>
        <authorList>
            <person name="Wu Q."/>
            <person name="Wen T."/>
            <person name="Lee G."/>
            <person name="Park J.H."/>
            <person name="Cai H.N."/>
            <person name="Shen P."/>
        </authorList>
    </citation>
    <scope>FUNCTION</scope>
    <scope>DEVELOPMENTAL STAGE</scope>
</reference>
<reference key="7">
    <citation type="journal article" date="2005" name="Proc. Natl. Acad. Sci. U.S.A.">
        <title>Drosophila neuropeptide F and its receptor, NPFR1, define a signaling pathway that acutely modulates alcohol sensitivity.</title>
        <authorList>
            <person name="Wen T."/>
            <person name="Parrish C.A."/>
            <person name="Xu D."/>
            <person name="Wu Q."/>
            <person name="Shen P."/>
        </authorList>
    </citation>
    <scope>FUNCTION</scope>
    <scope>TISSUE SPECIFICITY</scope>
    <scope>DISRUPTION PHENOTYPE</scope>
</reference>
<reference key="8">
    <citation type="journal article" date="2009" name="Cell">
        <title>A neural circuit mechanism integrating motivational state with memory expression in Drosophila.</title>
        <authorList>
            <person name="Krashes M.J."/>
            <person name="DasGupta S."/>
            <person name="Vreede A."/>
            <person name="White B."/>
            <person name="Armstrong J.D."/>
            <person name="Waddell S."/>
        </authorList>
    </citation>
    <scope>FUNCTION</scope>
    <scope>TISSUE SPECIFICITY</scope>
</reference>
<reference key="9">
    <citation type="journal article" date="2010" name="J. Neurosci.">
        <title>A G-protein-coupled neuropeptide Y-like receptor suppresses behavioral and sensory response to multiple stressful stimuli in Drosophila.</title>
        <authorList>
            <person name="Xu J."/>
            <person name="Li M."/>
            <person name="Shen P."/>
        </authorList>
    </citation>
    <scope>FUNCTION</scope>
    <scope>TISSUE SPECIFICITY</scope>
    <scope>DISRUPTION PHENOTYPE</scope>
</reference>
<reference key="10">
    <citation type="journal article" date="2012" name="Science">
        <title>Sexual deprivation increases ethanol intake in Drosophila.</title>
        <authorList>
            <person name="Shohat-Ophir G."/>
            <person name="Kaun K.R."/>
            <person name="Azanchi R."/>
            <person name="Heberlein U."/>
        </authorList>
    </citation>
    <scope>FUNCTION</scope>
    <scope>TISSUE SPECIFICITY</scope>
    <scope>DISRUPTION PHENOTYPE</scope>
</reference>
<comment type="function">
    <text evidence="2 4 5 6 7 8 9">Integral part of the sensory system that mediates food signaling, providing the neural basis for the regulation of food response; coordinates larval foraging and social behavior changes during development. Required in dopaminergic (DA) neurons that innervate the mushroom body for satiety to suppress appetitive memory performance; a key factor in the internal state of hunger in the brain. NPF neurons coordinately modulate diverse sensory and motor neurons important for feeding, flight, and locomotion. NPF/NPFR pathway exerts its suppressive effect on larval aversion to diverse stressful stimuli (chemical stress and noxious heat) through attenuation of TRP channel-induced neuronal excitation. NPF neural signaling system plays a physiological role in acute modulation of alcohol sensitivity in adults, rather than a general response to intoxication by sedative agents. Activation and inhibition of the NPF system reduces and enhances ethanol preference, respectively. Sexual experience, the NPF system activity and ethanol consumption are all linked; sexual deprivation is a major contributor to enhanced ethanol preference.</text>
</comment>
<comment type="subcellular location">
    <subcellularLocation>
        <location evidence="2">Secreted</location>
    </subcellularLocation>
</comment>
<comment type="tissue specificity">
    <text evidence="2 4 6 7 8 9">Expressed in midgut, brain lobes and ventral nerve cord of larvae. Predominantly expressed in two pairs of protocerebral neurons in the larval CNS (at protein level). Intense expression is also seen in the fan-shaped body of the central complex and two lateral areas of the lower part of the central brain that appear to harbor the giant commissural interneurons of the giant fiber pathway (at protein level). Upon glucose feeding, two additional dNPFergic neurons are consistently detected on the ventromedial surface of the subesophageal ganglion (SEG) of third instars larvae. Expressed in a subset of sugar-responsive PAIN neurons in the thoracic body but is absent from other peripheral PAIN neurons.</text>
</comment>
<comment type="developmental stage">
    <text evidence="5">Expression is high in larvae seeking food and is down-regulated in late embryos coinciding with the onset of the behavior of older larvae, including food aversion, hypermobility, and cooperative burrowing. In males, expression is increased by mating and reduced by sexual deprivation.</text>
</comment>
<comment type="disruption phenotype">
    <text evidence="6 8 9">Increased NPF or NPFR activity dominantly suppresses PAIN-mediated food aversion in postfeeding larvae. Deficiency in NPF/NPFR signaling causes decreased alcohol sensitivity and overexpression causes a hypersensitive response to alcohol sedation. Controlled functional disruption of NPF or NPFR neurons rapidly triggers acute resistance to ethanol sedation.</text>
</comment>
<comment type="similarity">
    <text evidence="1">Belongs to the NPY family.</text>
</comment>
<comment type="sequence caution" evidence="10">
    <conflict type="erroneous gene model prediction">
        <sequence resource="EMBL-CDS" id="AAD42053"/>
    </conflict>
</comment>
<comment type="online information" name="Protein Spotlight">
    <link uri="https://www.proteinspotlight.org/back_issues/138"/>
    <text>On sex, drugs and satisfaction - Issue 138 of May 2012</text>
</comment>
<proteinExistence type="evidence at protein level"/>
<evidence type="ECO:0000255" key="1"/>
<evidence type="ECO:0000269" key="2">
    <source>
    </source>
</evidence>
<evidence type="ECO:0000269" key="3">
    <source>
    </source>
</evidence>
<evidence type="ECO:0000269" key="4">
    <source>
    </source>
</evidence>
<evidence type="ECO:0000269" key="5">
    <source>
    </source>
</evidence>
<evidence type="ECO:0000269" key="6">
    <source>
    </source>
</evidence>
<evidence type="ECO:0000269" key="7">
    <source>
    </source>
</evidence>
<evidence type="ECO:0000269" key="8">
    <source>
    </source>
</evidence>
<evidence type="ECO:0000269" key="9">
    <source>
    </source>
</evidence>
<evidence type="ECO:0000305" key="10"/>
<evidence type="ECO:0000312" key="11">
    <source>
        <dbReference type="EMBL" id="AAD42053.1"/>
    </source>
</evidence>
<evidence type="ECO:0000312" key="12">
    <source>
        <dbReference type="EMBL" id="AAF55339.1"/>
    </source>
</evidence>
<evidence type="ECO:0000312" key="13">
    <source>
        <dbReference type="EMBL" id="AAZ41806.1"/>
    </source>
</evidence>
<organism>
    <name type="scientific">Drosophila melanogaster</name>
    <name type="common">Fruit fly</name>
    <dbReference type="NCBI Taxonomy" id="7227"/>
    <lineage>
        <taxon>Eukaryota</taxon>
        <taxon>Metazoa</taxon>
        <taxon>Ecdysozoa</taxon>
        <taxon>Arthropoda</taxon>
        <taxon>Hexapoda</taxon>
        <taxon>Insecta</taxon>
        <taxon>Pterygota</taxon>
        <taxon>Neoptera</taxon>
        <taxon>Endopterygota</taxon>
        <taxon>Diptera</taxon>
        <taxon>Brachycera</taxon>
        <taxon>Muscomorpha</taxon>
        <taxon>Ephydroidea</taxon>
        <taxon>Drosophilidae</taxon>
        <taxon>Drosophila</taxon>
        <taxon>Sophophora</taxon>
    </lineage>
</organism>
<feature type="signal peptide" evidence="1">
    <location>
        <begin position="1"/>
        <end position="26"/>
    </location>
</feature>
<feature type="propeptide" id="PRO_0000283079" evidence="2">
    <location>
        <begin position="27"/>
        <end position="32"/>
    </location>
</feature>
<feature type="peptide" id="PRO_0000283080" description="Neuropeptide F" evidence="2">
    <location>
        <begin position="35"/>
        <end position="62"/>
    </location>
</feature>
<feature type="propeptide" id="PRO_0000283081" evidence="2">
    <location>
        <begin position="66"/>
        <end position="102"/>
    </location>
</feature>
<feature type="modified residue" description="Phenylalanine amide" evidence="2">
    <location>
        <position position="62"/>
    </location>
</feature>
<feature type="sequence conflict" description="In Ref. 1; AA sequence." evidence="10" ref="1">
    <original>R</original>
    <variation>A</variation>
    <location>
        <position position="59"/>
    </location>
</feature>
<feature type="sequence conflict" description="In Ref. 1; AA sequence." evidence="10" ref="1">
    <original>R</original>
    <variation>V</variation>
    <location>
        <position position="61"/>
    </location>
</feature>
<feature type="sequence conflict" description="In Ref. 1; AAD42053." evidence="10" ref="1">
    <original>D</original>
    <variation>E</variation>
    <location>
        <position position="70"/>
    </location>
</feature>